<gene>
    <name type="primary">acyP</name>
    <name type="ordered locus">RPD_3091</name>
</gene>
<accession>Q135C2</accession>
<reference key="1">
    <citation type="submission" date="2006-03" db="EMBL/GenBank/DDBJ databases">
        <title>Complete sequence of Rhodopseudomonas palustris BisB5.</title>
        <authorList>
            <consortium name="US DOE Joint Genome Institute"/>
            <person name="Copeland A."/>
            <person name="Lucas S."/>
            <person name="Lapidus A."/>
            <person name="Barry K."/>
            <person name="Detter J.C."/>
            <person name="Glavina del Rio T."/>
            <person name="Hammon N."/>
            <person name="Israni S."/>
            <person name="Dalin E."/>
            <person name="Tice H."/>
            <person name="Pitluck S."/>
            <person name="Chain P."/>
            <person name="Malfatti S."/>
            <person name="Shin M."/>
            <person name="Vergez L."/>
            <person name="Schmutz J."/>
            <person name="Larimer F."/>
            <person name="Land M."/>
            <person name="Hauser L."/>
            <person name="Pelletier D.A."/>
            <person name="Kyrpides N."/>
            <person name="Lykidis A."/>
            <person name="Oda Y."/>
            <person name="Harwood C.S."/>
            <person name="Richardson P."/>
        </authorList>
    </citation>
    <scope>NUCLEOTIDE SEQUENCE [LARGE SCALE GENOMIC DNA]</scope>
    <source>
        <strain>BisB5</strain>
    </source>
</reference>
<organism>
    <name type="scientific">Rhodopseudomonas palustris (strain BisB5)</name>
    <dbReference type="NCBI Taxonomy" id="316057"/>
    <lineage>
        <taxon>Bacteria</taxon>
        <taxon>Pseudomonadati</taxon>
        <taxon>Pseudomonadota</taxon>
        <taxon>Alphaproteobacteria</taxon>
        <taxon>Hyphomicrobiales</taxon>
        <taxon>Nitrobacteraceae</taxon>
        <taxon>Rhodopseudomonas</taxon>
    </lineage>
</organism>
<sequence length="99" mass="10849">MSTTIRQVMVRGRVQGVGYRAWLAMTAEAQGLEGWVRNRRDGSVEALLAGRETVVAEMISRCRTGPSAAHVDEVIVEEAGQDALNLRYAGERFSILSTL</sequence>
<evidence type="ECO:0000255" key="1">
    <source>
        <dbReference type="PROSITE-ProRule" id="PRU00520"/>
    </source>
</evidence>
<evidence type="ECO:0000305" key="2"/>
<comment type="catalytic activity">
    <reaction>
        <text>an acyl phosphate + H2O = a carboxylate + phosphate + H(+)</text>
        <dbReference type="Rhea" id="RHEA:14965"/>
        <dbReference type="ChEBI" id="CHEBI:15377"/>
        <dbReference type="ChEBI" id="CHEBI:15378"/>
        <dbReference type="ChEBI" id="CHEBI:29067"/>
        <dbReference type="ChEBI" id="CHEBI:43474"/>
        <dbReference type="ChEBI" id="CHEBI:59918"/>
        <dbReference type="EC" id="3.6.1.7"/>
    </reaction>
</comment>
<comment type="similarity">
    <text evidence="2">Belongs to the acylphosphatase family.</text>
</comment>
<proteinExistence type="inferred from homology"/>
<name>ACYP_RHOPS</name>
<keyword id="KW-0378">Hydrolase</keyword>
<feature type="chain" id="PRO_0000326788" description="Acylphosphatase">
    <location>
        <begin position="1"/>
        <end position="99"/>
    </location>
</feature>
<feature type="domain" description="Acylphosphatase-like" evidence="1">
    <location>
        <begin position="5"/>
        <end position="97"/>
    </location>
</feature>
<feature type="active site" evidence="1">
    <location>
        <position position="20"/>
    </location>
</feature>
<feature type="active site" evidence="1">
    <location>
        <position position="38"/>
    </location>
</feature>
<dbReference type="EC" id="3.6.1.7"/>
<dbReference type="EMBL" id="CP000283">
    <property type="protein sequence ID" value="ABE40317.1"/>
    <property type="molecule type" value="Genomic_DNA"/>
</dbReference>
<dbReference type="SMR" id="Q135C2"/>
<dbReference type="STRING" id="316057.RPD_3091"/>
<dbReference type="KEGG" id="rpd:RPD_3091"/>
<dbReference type="eggNOG" id="COG1254">
    <property type="taxonomic scope" value="Bacteria"/>
</dbReference>
<dbReference type="HOGENOM" id="CLU_141932_3_2_5"/>
<dbReference type="BioCyc" id="RPAL316057:RPD_RS15525-MONOMER"/>
<dbReference type="Proteomes" id="UP000001818">
    <property type="component" value="Chromosome"/>
</dbReference>
<dbReference type="GO" id="GO:0003998">
    <property type="term" value="F:acylphosphatase activity"/>
    <property type="evidence" value="ECO:0007669"/>
    <property type="project" value="UniProtKB-EC"/>
</dbReference>
<dbReference type="Gene3D" id="3.30.70.100">
    <property type="match status" value="1"/>
</dbReference>
<dbReference type="InterPro" id="IPR020456">
    <property type="entry name" value="Acylphosphatase"/>
</dbReference>
<dbReference type="InterPro" id="IPR001792">
    <property type="entry name" value="Acylphosphatase-like_dom"/>
</dbReference>
<dbReference type="InterPro" id="IPR036046">
    <property type="entry name" value="Acylphosphatase-like_dom_sf"/>
</dbReference>
<dbReference type="InterPro" id="IPR017968">
    <property type="entry name" value="Acylphosphatase_CS"/>
</dbReference>
<dbReference type="NCBIfam" id="NF010996">
    <property type="entry name" value="PRK14421.1"/>
    <property type="match status" value="1"/>
</dbReference>
<dbReference type="PANTHER" id="PTHR47268">
    <property type="entry name" value="ACYLPHOSPHATASE"/>
    <property type="match status" value="1"/>
</dbReference>
<dbReference type="PANTHER" id="PTHR47268:SF4">
    <property type="entry name" value="ACYLPHOSPHATASE"/>
    <property type="match status" value="1"/>
</dbReference>
<dbReference type="Pfam" id="PF00708">
    <property type="entry name" value="Acylphosphatase"/>
    <property type="match status" value="1"/>
</dbReference>
<dbReference type="SUPFAM" id="SSF54975">
    <property type="entry name" value="Acylphosphatase/BLUF domain-like"/>
    <property type="match status" value="1"/>
</dbReference>
<dbReference type="PROSITE" id="PS00151">
    <property type="entry name" value="ACYLPHOSPHATASE_2"/>
    <property type="match status" value="1"/>
</dbReference>
<dbReference type="PROSITE" id="PS51160">
    <property type="entry name" value="ACYLPHOSPHATASE_3"/>
    <property type="match status" value="1"/>
</dbReference>
<protein>
    <recommendedName>
        <fullName>Acylphosphatase</fullName>
        <ecNumber>3.6.1.7</ecNumber>
    </recommendedName>
    <alternativeName>
        <fullName>Acylphosphate phosphohydrolase</fullName>
    </alternativeName>
</protein>